<evidence type="ECO:0000255" key="1">
    <source>
        <dbReference type="HAMAP-Rule" id="MF_00012"/>
    </source>
</evidence>
<accession>Q2G7E9</accession>
<dbReference type="EC" id="4.2.1.9" evidence="1"/>
<dbReference type="EMBL" id="CP000248">
    <property type="protein sequence ID" value="ABD26224.1"/>
    <property type="molecule type" value="Genomic_DNA"/>
</dbReference>
<dbReference type="RefSeq" id="WP_011445434.1">
    <property type="nucleotide sequence ID" value="NC_007794.1"/>
</dbReference>
<dbReference type="SMR" id="Q2G7E9"/>
<dbReference type="STRING" id="279238.Saro_1784"/>
<dbReference type="KEGG" id="nar:Saro_1784"/>
<dbReference type="eggNOG" id="COG0129">
    <property type="taxonomic scope" value="Bacteria"/>
</dbReference>
<dbReference type="HOGENOM" id="CLU_014271_4_2_5"/>
<dbReference type="UniPathway" id="UPA00047">
    <property type="reaction ID" value="UER00057"/>
</dbReference>
<dbReference type="UniPathway" id="UPA00049">
    <property type="reaction ID" value="UER00061"/>
</dbReference>
<dbReference type="Proteomes" id="UP000009134">
    <property type="component" value="Chromosome"/>
</dbReference>
<dbReference type="GO" id="GO:0005829">
    <property type="term" value="C:cytosol"/>
    <property type="evidence" value="ECO:0007669"/>
    <property type="project" value="TreeGrafter"/>
</dbReference>
<dbReference type="GO" id="GO:0051537">
    <property type="term" value="F:2 iron, 2 sulfur cluster binding"/>
    <property type="evidence" value="ECO:0007669"/>
    <property type="project" value="UniProtKB-UniRule"/>
</dbReference>
<dbReference type="GO" id="GO:0004160">
    <property type="term" value="F:dihydroxy-acid dehydratase activity"/>
    <property type="evidence" value="ECO:0007669"/>
    <property type="project" value="UniProtKB-UniRule"/>
</dbReference>
<dbReference type="GO" id="GO:0000287">
    <property type="term" value="F:magnesium ion binding"/>
    <property type="evidence" value="ECO:0007669"/>
    <property type="project" value="UniProtKB-UniRule"/>
</dbReference>
<dbReference type="GO" id="GO:0009097">
    <property type="term" value="P:isoleucine biosynthetic process"/>
    <property type="evidence" value="ECO:0007669"/>
    <property type="project" value="UniProtKB-UniRule"/>
</dbReference>
<dbReference type="GO" id="GO:0009099">
    <property type="term" value="P:L-valine biosynthetic process"/>
    <property type="evidence" value="ECO:0007669"/>
    <property type="project" value="UniProtKB-UniRule"/>
</dbReference>
<dbReference type="FunFam" id="3.50.30.80:FF:000001">
    <property type="entry name" value="Dihydroxy-acid dehydratase"/>
    <property type="match status" value="1"/>
</dbReference>
<dbReference type="Gene3D" id="3.50.30.80">
    <property type="entry name" value="IlvD/EDD C-terminal domain-like"/>
    <property type="match status" value="1"/>
</dbReference>
<dbReference type="HAMAP" id="MF_00012">
    <property type="entry name" value="IlvD"/>
    <property type="match status" value="1"/>
</dbReference>
<dbReference type="InterPro" id="IPR042096">
    <property type="entry name" value="Dihydro-acid_dehy_C"/>
</dbReference>
<dbReference type="InterPro" id="IPR004404">
    <property type="entry name" value="DihydroxyA_deHydtase"/>
</dbReference>
<dbReference type="InterPro" id="IPR020558">
    <property type="entry name" value="DiOHA_6PGluconate_deHydtase_CS"/>
</dbReference>
<dbReference type="InterPro" id="IPR056740">
    <property type="entry name" value="ILV_EDD_C"/>
</dbReference>
<dbReference type="InterPro" id="IPR000581">
    <property type="entry name" value="ILV_EDD_N"/>
</dbReference>
<dbReference type="InterPro" id="IPR037237">
    <property type="entry name" value="IlvD/EDD_N"/>
</dbReference>
<dbReference type="NCBIfam" id="TIGR00110">
    <property type="entry name" value="ilvD"/>
    <property type="match status" value="1"/>
</dbReference>
<dbReference type="NCBIfam" id="NF009103">
    <property type="entry name" value="PRK12448.1"/>
    <property type="match status" value="1"/>
</dbReference>
<dbReference type="PANTHER" id="PTHR43661">
    <property type="entry name" value="D-XYLONATE DEHYDRATASE"/>
    <property type="match status" value="1"/>
</dbReference>
<dbReference type="PANTHER" id="PTHR43661:SF3">
    <property type="entry name" value="D-XYLONATE DEHYDRATASE YAGF-RELATED"/>
    <property type="match status" value="1"/>
</dbReference>
<dbReference type="Pfam" id="PF24877">
    <property type="entry name" value="ILV_EDD_C"/>
    <property type="match status" value="1"/>
</dbReference>
<dbReference type="Pfam" id="PF00920">
    <property type="entry name" value="ILVD_EDD_N"/>
    <property type="match status" value="1"/>
</dbReference>
<dbReference type="SUPFAM" id="SSF143975">
    <property type="entry name" value="IlvD/EDD N-terminal domain-like"/>
    <property type="match status" value="1"/>
</dbReference>
<dbReference type="SUPFAM" id="SSF52016">
    <property type="entry name" value="LeuD/IlvD-like"/>
    <property type="match status" value="1"/>
</dbReference>
<dbReference type="PROSITE" id="PS00886">
    <property type="entry name" value="ILVD_EDD_1"/>
    <property type="match status" value="1"/>
</dbReference>
<dbReference type="PROSITE" id="PS00887">
    <property type="entry name" value="ILVD_EDD_2"/>
    <property type="match status" value="1"/>
</dbReference>
<feature type="chain" id="PRO_1000001021" description="Dihydroxy-acid dehydratase">
    <location>
        <begin position="1"/>
        <end position="615"/>
    </location>
</feature>
<feature type="active site" description="Proton acceptor" evidence="1">
    <location>
        <position position="517"/>
    </location>
</feature>
<feature type="binding site" evidence="1">
    <location>
        <position position="81"/>
    </location>
    <ligand>
        <name>Mg(2+)</name>
        <dbReference type="ChEBI" id="CHEBI:18420"/>
    </ligand>
</feature>
<feature type="binding site" evidence="1">
    <location>
        <position position="122"/>
    </location>
    <ligand>
        <name>[2Fe-2S] cluster</name>
        <dbReference type="ChEBI" id="CHEBI:190135"/>
    </ligand>
</feature>
<feature type="binding site" evidence="1">
    <location>
        <position position="123"/>
    </location>
    <ligand>
        <name>Mg(2+)</name>
        <dbReference type="ChEBI" id="CHEBI:18420"/>
    </ligand>
</feature>
<feature type="binding site" description="via carbamate group" evidence="1">
    <location>
        <position position="124"/>
    </location>
    <ligand>
        <name>Mg(2+)</name>
        <dbReference type="ChEBI" id="CHEBI:18420"/>
    </ligand>
</feature>
<feature type="binding site" evidence="1">
    <location>
        <position position="195"/>
    </location>
    <ligand>
        <name>[2Fe-2S] cluster</name>
        <dbReference type="ChEBI" id="CHEBI:190135"/>
    </ligand>
</feature>
<feature type="binding site" evidence="1">
    <location>
        <position position="491"/>
    </location>
    <ligand>
        <name>Mg(2+)</name>
        <dbReference type="ChEBI" id="CHEBI:18420"/>
    </ligand>
</feature>
<feature type="modified residue" description="N6-carboxylysine" evidence="1">
    <location>
        <position position="124"/>
    </location>
</feature>
<protein>
    <recommendedName>
        <fullName evidence="1">Dihydroxy-acid dehydratase</fullName>
        <shortName evidence="1">DAD</shortName>
        <ecNumber evidence="1">4.2.1.9</ecNumber>
    </recommendedName>
</protein>
<name>ILVD_NOVAD</name>
<keyword id="KW-0001">2Fe-2S</keyword>
<keyword id="KW-0028">Amino-acid biosynthesis</keyword>
<keyword id="KW-0100">Branched-chain amino acid biosynthesis</keyword>
<keyword id="KW-0408">Iron</keyword>
<keyword id="KW-0411">Iron-sulfur</keyword>
<keyword id="KW-0456">Lyase</keyword>
<keyword id="KW-0460">Magnesium</keyword>
<keyword id="KW-0479">Metal-binding</keyword>
<keyword id="KW-1185">Reference proteome</keyword>
<comment type="function">
    <text evidence="1">Functions in the biosynthesis of branched-chain amino acids. Catalyzes the dehydration of (2R,3R)-2,3-dihydroxy-3-methylpentanoate (2,3-dihydroxy-3-methylvalerate) into 2-oxo-3-methylpentanoate (2-oxo-3-methylvalerate) and of (2R)-2,3-dihydroxy-3-methylbutanoate (2,3-dihydroxyisovalerate) into 2-oxo-3-methylbutanoate (2-oxoisovalerate), the penultimate precursor to L-isoleucine and L-valine, respectively.</text>
</comment>
<comment type="catalytic activity">
    <reaction evidence="1">
        <text>(2R)-2,3-dihydroxy-3-methylbutanoate = 3-methyl-2-oxobutanoate + H2O</text>
        <dbReference type="Rhea" id="RHEA:24809"/>
        <dbReference type="ChEBI" id="CHEBI:11851"/>
        <dbReference type="ChEBI" id="CHEBI:15377"/>
        <dbReference type="ChEBI" id="CHEBI:49072"/>
        <dbReference type="EC" id="4.2.1.9"/>
    </reaction>
    <physiologicalReaction direction="left-to-right" evidence="1">
        <dbReference type="Rhea" id="RHEA:24810"/>
    </physiologicalReaction>
</comment>
<comment type="catalytic activity">
    <reaction evidence="1">
        <text>(2R,3R)-2,3-dihydroxy-3-methylpentanoate = (S)-3-methyl-2-oxopentanoate + H2O</text>
        <dbReference type="Rhea" id="RHEA:27694"/>
        <dbReference type="ChEBI" id="CHEBI:15377"/>
        <dbReference type="ChEBI" id="CHEBI:35146"/>
        <dbReference type="ChEBI" id="CHEBI:49258"/>
        <dbReference type="EC" id="4.2.1.9"/>
    </reaction>
    <physiologicalReaction direction="left-to-right" evidence="1">
        <dbReference type="Rhea" id="RHEA:27695"/>
    </physiologicalReaction>
</comment>
<comment type="cofactor">
    <cofactor evidence="1">
        <name>[2Fe-2S] cluster</name>
        <dbReference type="ChEBI" id="CHEBI:190135"/>
    </cofactor>
    <text evidence="1">Binds 1 [2Fe-2S] cluster per subunit. This cluster acts as a Lewis acid cofactor.</text>
</comment>
<comment type="cofactor">
    <cofactor evidence="1">
        <name>Mg(2+)</name>
        <dbReference type="ChEBI" id="CHEBI:18420"/>
    </cofactor>
</comment>
<comment type="pathway">
    <text evidence="1">Amino-acid biosynthesis; L-isoleucine biosynthesis; L-isoleucine from 2-oxobutanoate: step 3/4.</text>
</comment>
<comment type="pathway">
    <text evidence="1">Amino-acid biosynthesis; L-valine biosynthesis; L-valine from pyruvate: step 3/4.</text>
</comment>
<comment type="subunit">
    <text evidence="1">Homodimer.</text>
</comment>
<comment type="similarity">
    <text evidence="1">Belongs to the IlvD/Edd family.</text>
</comment>
<organism>
    <name type="scientific">Novosphingobium aromaticivorans (strain ATCC 700278 / DSM 12444 / CCUG 56034 / CIP 105152 / NBRC 16084 / F199)</name>
    <dbReference type="NCBI Taxonomy" id="279238"/>
    <lineage>
        <taxon>Bacteria</taxon>
        <taxon>Pseudomonadati</taxon>
        <taxon>Pseudomonadota</taxon>
        <taxon>Alphaproteobacteria</taxon>
        <taxon>Sphingomonadales</taxon>
        <taxon>Sphingomonadaceae</taxon>
        <taxon>Novosphingobium</taxon>
    </lineage>
</organism>
<proteinExistence type="inferred from homology"/>
<gene>
    <name evidence="1" type="primary">ilvD</name>
    <name type="ordered locus">Saro_1784</name>
</gene>
<reference key="1">
    <citation type="submission" date="2006-01" db="EMBL/GenBank/DDBJ databases">
        <title>Complete sequence of Novosphingobium aromaticivorans DSM 12444.</title>
        <authorList>
            <consortium name="US DOE Joint Genome Institute"/>
            <person name="Copeland A."/>
            <person name="Lucas S."/>
            <person name="Lapidus A."/>
            <person name="Barry K."/>
            <person name="Detter J.C."/>
            <person name="Glavina T."/>
            <person name="Hammon N."/>
            <person name="Israni S."/>
            <person name="Pitluck S."/>
            <person name="Chain P."/>
            <person name="Malfatti S."/>
            <person name="Shin M."/>
            <person name="Vergez L."/>
            <person name="Schmutz J."/>
            <person name="Larimer F."/>
            <person name="Land M."/>
            <person name="Kyrpides N."/>
            <person name="Ivanova N."/>
            <person name="Fredrickson J."/>
            <person name="Balkwill D."/>
            <person name="Romine M.F."/>
            <person name="Richardson P."/>
        </authorList>
    </citation>
    <scope>NUCLEOTIDE SEQUENCE [LARGE SCALE GENOMIC DNA]</scope>
    <source>
        <strain>ATCC 700278 / DSM 12444 / CCUG 56034 / CIP 105152 / NBRC 16084 / F199</strain>
    </source>
</reference>
<sequence>MPAYRSRTTTHGRNMAGARGLWRATGMKDSDFGKPIIAVVNSFTQFVPGHVHLKDLGQMVAREIEAAGGVAKEFNTIAVDDGIAMGHDGMLYSLPSRDLIADSVEYMVNAHCADAMVCISNCDKITPGMLMAAMRINIPVVFVSGGPMEAGKVILKGKEHALDLVDAMVAAADESFTDEEVTAIERSACPTCGSCSGMFTANSMNCLTEALGLSLPGNGSTLATHADRQRLFLEAGRLVVDLCKRYYEQDDESVLPRSIATFEAFENAMSLDIAMGGSTNTVLHLLAAAHEAGVNFTMSDIDHLSRKVPCLSKVAPAKSDVHMEDVHRAGGIYAILGELDRAGLLHTHLPTVHSRTLGDALNQWDVKRTNSPTVQEFFRAAPGGVPTQVAFSQDRRWKELDLDRETGVIRSAEHAFSKDGGLAVLFGNIAREGCIVKTAGVDDSILKFTGPAKVYESQDAAVTAILTGQVTSGDVVVIRYEGPKGGPGMQEMLYPTSYLKSKGLGAACALLTDGRFSGGTSGLSIGHVSPEAAEGGEIGLVENGDVIEIDIPNRTIHLAVADDVLAQRRAEQEAKGWKPVKERPRKVSTALRAYAAMTTSAARGAVRDLSQLKID</sequence>